<protein>
    <recommendedName>
        <fullName evidence="1">Phosphoglycerol transferase I</fullName>
        <ecNumber evidence="1">2.7.8.20</ecNumber>
    </recommendedName>
    <alternativeName>
        <fullName evidence="1">Phosphatidylglycerol--membrane-oligosaccharide glycerophosphotransferase</fullName>
    </alternativeName>
</protein>
<gene>
    <name evidence="1" type="primary">mdoB</name>
    <name evidence="1" type="synonym">opgB</name>
    <name type="ordered locus">STM4541</name>
</gene>
<feature type="chain" id="PRO_0000213063" description="Phosphoglycerol transferase I">
    <location>
        <begin position="1"/>
        <end position="763"/>
    </location>
</feature>
<feature type="transmembrane region" description="Helical" evidence="1">
    <location>
        <begin position="4"/>
        <end position="19"/>
    </location>
</feature>
<feature type="transmembrane region" description="Helical" evidence="1">
    <location>
        <begin position="26"/>
        <end position="48"/>
    </location>
</feature>
<feature type="transmembrane region" description="Helical" evidence="1">
    <location>
        <begin position="76"/>
        <end position="98"/>
    </location>
</feature>
<feature type="transmembrane region" description="Helical" evidence="1">
    <location>
        <begin position="110"/>
        <end position="132"/>
    </location>
</feature>
<name>OPGB_SALTY</name>
<accession>Q8ZJX6</accession>
<proteinExistence type="inferred from homology"/>
<sequence>MSELLSVALFLASVLIYAWKAGRNTWWFAATLTVLGLFVILNITLYASDYFTGDGINDAVLYTLTNSLTGAGVGKYILPGIGIALALVAVFGALGWVLRRRRHHPHHVGYSLLALLLALGSVDASPAFRQITELVKSQMRDGDPDFAVYYKEPAKTIPNPKLNLVYIYGESLERTYFDNDAFPNLTPELGALKNEGLDFSHTMQLPGTDYTIAGMVASQCGIPLFAPFEGNASASVSSFFPQNICLGDILKNSGYQNYFVQGANLRFAGKDVFLKSHGFDHLYGAEELKTVVADPSYRNDWGFYDDTVLDEAWKKFEALSRSGQRFSLFTLTVDTHHPDGFISRTCNRKRYDYDGKPNQSFSAVSCSQENIAEFINKIKASPWFKDTVIVVSSDHLAMNNTAWKYLNKQDRNNLFFILRGDKPQQETLAVKRNTMDNGATVLDILGGDNFIGLGRSSLSGQSLSEVFLNVKEKVLAMKPDIIRLWNFPKEIKDFTVDRDKNMIAFSGSHFRLPLLLRVSDKRVEPLPESEYSAPLRFQLADFAPRDNFVWIDRCYKMAQLWAPALALSTDWCVSQGQLGGQQTVQHVDKAQWQGKTAFKDTMIDMERYKGNVDTLKIVDNDIRYKADSFIFNVAGAPEEVKQFSGISRPESWGRWSNAQLGDEVKIEYKAPLPKKFDLVITAKAFGDNANRPIPVRVGNEEQTLVLGHDVSTITLHFNNPTDANTLVIAPPAPVSTNEGNILGHSPRKLGIGMVEIKVVNVES</sequence>
<dbReference type="EC" id="2.7.8.20" evidence="1"/>
<dbReference type="EMBL" id="AE006468">
    <property type="protein sequence ID" value="AAL23359.1"/>
    <property type="status" value="ALT_INIT"/>
    <property type="molecule type" value="Genomic_DNA"/>
</dbReference>
<dbReference type="RefSeq" id="NP_463400.3">
    <property type="nucleotide sequence ID" value="NC_003197.2"/>
</dbReference>
<dbReference type="RefSeq" id="WP_014344525.1">
    <property type="nucleotide sequence ID" value="NC_003197.2"/>
</dbReference>
<dbReference type="SMR" id="Q8ZJX6"/>
<dbReference type="STRING" id="99287.STM4541"/>
<dbReference type="PaxDb" id="99287-STM4541"/>
<dbReference type="GeneID" id="1256067"/>
<dbReference type="KEGG" id="stm:STM4541"/>
<dbReference type="PATRIC" id="fig|99287.12.peg.4785"/>
<dbReference type="HOGENOM" id="CLU_023986_1_0_6"/>
<dbReference type="OMA" id="AMNNTAY"/>
<dbReference type="PhylomeDB" id="Q8ZJX6"/>
<dbReference type="UniPathway" id="UPA00637"/>
<dbReference type="Proteomes" id="UP000001014">
    <property type="component" value="Chromosome"/>
</dbReference>
<dbReference type="GO" id="GO:0016020">
    <property type="term" value="C:membrane"/>
    <property type="evidence" value="ECO:0000318"/>
    <property type="project" value="GO_Central"/>
</dbReference>
<dbReference type="GO" id="GO:0005886">
    <property type="term" value="C:plasma membrane"/>
    <property type="evidence" value="ECO:0007669"/>
    <property type="project" value="UniProtKB-SubCell"/>
</dbReference>
<dbReference type="GO" id="GO:0008960">
    <property type="term" value="F:phosphatidylglycerol-membrane-oligosaccharide glycerophosphotransferase activity"/>
    <property type="evidence" value="ECO:0007669"/>
    <property type="project" value="UniProtKB-UniRule"/>
</dbReference>
<dbReference type="GO" id="GO:0016740">
    <property type="term" value="F:transferase activity"/>
    <property type="evidence" value="ECO:0000318"/>
    <property type="project" value="GO_Central"/>
</dbReference>
<dbReference type="GO" id="GO:0009250">
    <property type="term" value="P:glucan biosynthetic process"/>
    <property type="evidence" value="ECO:0007669"/>
    <property type="project" value="UniProtKB-UniRule"/>
</dbReference>
<dbReference type="CDD" id="cd16015">
    <property type="entry name" value="LTA_synthase"/>
    <property type="match status" value="1"/>
</dbReference>
<dbReference type="FunFam" id="3.40.720.10:FF:000009">
    <property type="entry name" value="Phosphoglycerol transferase I"/>
    <property type="match status" value="1"/>
</dbReference>
<dbReference type="Gene3D" id="3.40.720.10">
    <property type="entry name" value="Alkaline Phosphatase, subunit A"/>
    <property type="match status" value="1"/>
</dbReference>
<dbReference type="HAMAP" id="MF_01070">
    <property type="entry name" value="MdoB_OpgB"/>
    <property type="match status" value="1"/>
</dbReference>
<dbReference type="InterPro" id="IPR017850">
    <property type="entry name" value="Alkaline_phosphatase_core_sf"/>
</dbReference>
<dbReference type="InterPro" id="IPR054288">
    <property type="entry name" value="DUF7024"/>
</dbReference>
<dbReference type="InterPro" id="IPR020881">
    <property type="entry name" value="OpgB"/>
</dbReference>
<dbReference type="InterPro" id="IPR050448">
    <property type="entry name" value="OpgB/LTA_synthase_biosynth"/>
</dbReference>
<dbReference type="InterPro" id="IPR000917">
    <property type="entry name" value="Sulfatase_N"/>
</dbReference>
<dbReference type="NCBIfam" id="NF003000">
    <property type="entry name" value="PRK03776.1"/>
    <property type="match status" value="1"/>
</dbReference>
<dbReference type="PANTHER" id="PTHR47371">
    <property type="entry name" value="LIPOTEICHOIC ACID SYNTHASE"/>
    <property type="match status" value="1"/>
</dbReference>
<dbReference type="PANTHER" id="PTHR47371:SF3">
    <property type="entry name" value="PHOSPHOGLYCEROL TRANSFERASE I"/>
    <property type="match status" value="1"/>
</dbReference>
<dbReference type="Pfam" id="PF22895">
    <property type="entry name" value="DUF7024"/>
    <property type="match status" value="1"/>
</dbReference>
<dbReference type="Pfam" id="PF00884">
    <property type="entry name" value="Sulfatase"/>
    <property type="match status" value="1"/>
</dbReference>
<dbReference type="SUPFAM" id="SSF53649">
    <property type="entry name" value="Alkaline phosphatase-like"/>
    <property type="match status" value="1"/>
</dbReference>
<organism>
    <name type="scientific">Salmonella typhimurium (strain LT2 / SGSC1412 / ATCC 700720)</name>
    <dbReference type="NCBI Taxonomy" id="99287"/>
    <lineage>
        <taxon>Bacteria</taxon>
        <taxon>Pseudomonadati</taxon>
        <taxon>Pseudomonadota</taxon>
        <taxon>Gammaproteobacteria</taxon>
        <taxon>Enterobacterales</taxon>
        <taxon>Enterobacteriaceae</taxon>
        <taxon>Salmonella</taxon>
    </lineage>
</organism>
<evidence type="ECO:0000255" key="1">
    <source>
        <dbReference type="HAMAP-Rule" id="MF_01070"/>
    </source>
</evidence>
<evidence type="ECO:0000305" key="2"/>
<keyword id="KW-0997">Cell inner membrane</keyword>
<keyword id="KW-1003">Cell membrane</keyword>
<keyword id="KW-0472">Membrane</keyword>
<keyword id="KW-1185">Reference proteome</keyword>
<keyword id="KW-0808">Transferase</keyword>
<keyword id="KW-0812">Transmembrane</keyword>
<keyword id="KW-1133">Transmembrane helix</keyword>
<reference key="1">
    <citation type="journal article" date="2001" name="Nature">
        <title>Complete genome sequence of Salmonella enterica serovar Typhimurium LT2.</title>
        <authorList>
            <person name="McClelland M."/>
            <person name="Sanderson K.E."/>
            <person name="Spieth J."/>
            <person name="Clifton S.W."/>
            <person name="Latreille P."/>
            <person name="Courtney L."/>
            <person name="Porwollik S."/>
            <person name="Ali J."/>
            <person name="Dante M."/>
            <person name="Du F."/>
            <person name="Hou S."/>
            <person name="Layman D."/>
            <person name="Leonard S."/>
            <person name="Nguyen C."/>
            <person name="Scott K."/>
            <person name="Holmes A."/>
            <person name="Grewal N."/>
            <person name="Mulvaney E."/>
            <person name="Ryan E."/>
            <person name="Sun H."/>
            <person name="Florea L."/>
            <person name="Miller W."/>
            <person name="Stoneking T."/>
            <person name="Nhan M."/>
            <person name="Waterston R."/>
            <person name="Wilson R.K."/>
        </authorList>
    </citation>
    <scope>NUCLEOTIDE SEQUENCE [LARGE SCALE GENOMIC DNA]</scope>
    <source>
        <strain>LT2 / SGSC1412 / ATCC 700720</strain>
    </source>
</reference>
<comment type="function">
    <text evidence="1">Transfers a phosphoglycerol residue from phosphatidylglycerol to the membrane-bound nascent glucan backbones.</text>
</comment>
<comment type="catalytic activity">
    <reaction evidence="1">
        <text>a phosphatidylglycerol + a membrane-derived-oligosaccharide D-glucose = a 1,2-diacyl-sn-glycerol + a membrane-derived-oligosaccharide 6-(glycerophospho)-D-glucose.</text>
        <dbReference type="EC" id="2.7.8.20"/>
    </reaction>
</comment>
<comment type="pathway">
    <text evidence="1">Glycan metabolism; osmoregulated periplasmic glucan (OPG) biosynthesis.</text>
</comment>
<comment type="subcellular location">
    <subcellularLocation>
        <location evidence="1">Cell inner membrane</location>
        <topology evidence="1">Multi-pass membrane protein</topology>
    </subcellularLocation>
</comment>
<comment type="similarity">
    <text evidence="1">Belongs to the OpgB family.</text>
</comment>
<comment type="sequence caution" evidence="2">
    <conflict type="erroneous initiation">
        <sequence resource="EMBL-CDS" id="AAL23359"/>
    </conflict>
</comment>